<name>RNY_CLOP1</name>
<evidence type="ECO:0000255" key="1">
    <source>
        <dbReference type="HAMAP-Rule" id="MF_00335"/>
    </source>
</evidence>
<evidence type="ECO:0000255" key="2">
    <source>
        <dbReference type="PROSITE-ProRule" id="PRU01175"/>
    </source>
</evidence>
<keyword id="KW-1003">Cell membrane</keyword>
<keyword id="KW-0255">Endonuclease</keyword>
<keyword id="KW-0378">Hydrolase</keyword>
<keyword id="KW-0472">Membrane</keyword>
<keyword id="KW-0540">Nuclease</keyword>
<keyword id="KW-0694">RNA-binding</keyword>
<keyword id="KW-0812">Transmembrane</keyword>
<keyword id="KW-1133">Transmembrane helix</keyword>
<sequence>MVVGILIGIIILGVVGFIQYTLIQKASKNRVESLEKEASLTLEEAKREAESTKKEAILEAKEEVHKLRADLDKETRDRRNEIQRFERRLIQREESLDKKGEMLEKREDSINKKSIEIQELEERVQNLYGEQRAELERISNLSSEDARTLLLDEVRREIKHESAMLIKELETKAKEEADKKSREIITTAIQRCAADHVSETTVHVVALPNDEMKGRIIGREGRNIRTLETLTGVDLIIDDTPEAVILSSFDPIRREVARIALEKLIVDGRIHPARIEEMVERAIKDVENDIKEEGEQATFETGVHGLHPEIIKLLGRLKYRTSYGQNVLKHSIEVSYLAGLMASELGLDVNLARRAGLLHDIGKGVDQEYEGPHAVIGGELAKKYHESPAVVNAIAAHHGDTEMQTLEAVLVQAADAISAARPGARRETLEAYIKRLEKLEEIATSYEGVEKSYAIQAGREIRIMVKPDQVDDAGAIEMARNIVKKIEEQLEYPGQIKINVIRETRAVDYAK</sequence>
<comment type="function">
    <text evidence="1">Endoribonuclease that initiates mRNA decay.</text>
</comment>
<comment type="subcellular location">
    <subcellularLocation>
        <location evidence="1">Cell membrane</location>
        <topology evidence="1">Single-pass membrane protein</topology>
    </subcellularLocation>
</comment>
<comment type="similarity">
    <text evidence="1">Belongs to the RNase Y family.</text>
</comment>
<organism>
    <name type="scientific">Clostridium perfringens (strain ATCC 13124 / DSM 756 / JCM 1290 / NCIMB 6125 / NCTC 8237 / Type A)</name>
    <dbReference type="NCBI Taxonomy" id="195103"/>
    <lineage>
        <taxon>Bacteria</taxon>
        <taxon>Bacillati</taxon>
        <taxon>Bacillota</taxon>
        <taxon>Clostridia</taxon>
        <taxon>Eubacteriales</taxon>
        <taxon>Clostridiaceae</taxon>
        <taxon>Clostridium</taxon>
    </lineage>
</organism>
<gene>
    <name evidence="1" type="primary">rny</name>
    <name type="ordered locus">CPF_1926</name>
</gene>
<feature type="chain" id="PRO_0000344853" description="Ribonuclease Y">
    <location>
        <begin position="1"/>
        <end position="511"/>
    </location>
</feature>
<feature type="transmembrane region" description="Helical" evidence="1">
    <location>
        <begin position="3"/>
        <end position="23"/>
    </location>
</feature>
<feature type="domain" description="KH" evidence="1">
    <location>
        <begin position="201"/>
        <end position="286"/>
    </location>
</feature>
<feature type="domain" description="HD" evidence="2">
    <location>
        <begin position="327"/>
        <end position="420"/>
    </location>
</feature>
<proteinExistence type="inferred from homology"/>
<protein>
    <recommendedName>
        <fullName evidence="1">Ribonuclease Y</fullName>
        <shortName evidence="1">RNase Y</shortName>
        <ecNumber evidence="1">3.1.-.-</ecNumber>
    </recommendedName>
</protein>
<accession>Q0TPT1</accession>
<reference key="1">
    <citation type="journal article" date="2006" name="Genome Res.">
        <title>Skewed genomic variability in strains of the toxigenic bacterial pathogen, Clostridium perfringens.</title>
        <authorList>
            <person name="Myers G.S.A."/>
            <person name="Rasko D.A."/>
            <person name="Cheung J.K."/>
            <person name="Ravel J."/>
            <person name="Seshadri R."/>
            <person name="DeBoy R.T."/>
            <person name="Ren Q."/>
            <person name="Varga J."/>
            <person name="Awad M.M."/>
            <person name="Brinkac L.M."/>
            <person name="Daugherty S.C."/>
            <person name="Haft D.H."/>
            <person name="Dodson R.J."/>
            <person name="Madupu R."/>
            <person name="Nelson W.C."/>
            <person name="Rosovitz M.J."/>
            <person name="Sullivan S.A."/>
            <person name="Khouri H."/>
            <person name="Dimitrov G.I."/>
            <person name="Watkins K.L."/>
            <person name="Mulligan S."/>
            <person name="Benton J."/>
            <person name="Radune D."/>
            <person name="Fisher D.J."/>
            <person name="Atkins H.S."/>
            <person name="Hiscox T."/>
            <person name="Jost B.H."/>
            <person name="Billington S.J."/>
            <person name="Songer J.G."/>
            <person name="McClane B.A."/>
            <person name="Titball R.W."/>
            <person name="Rood J.I."/>
            <person name="Melville S.B."/>
            <person name="Paulsen I.T."/>
        </authorList>
    </citation>
    <scope>NUCLEOTIDE SEQUENCE [LARGE SCALE GENOMIC DNA]</scope>
    <source>
        <strain>ATCC 13124 / DSM 756 / JCM 1290 / NCIMB 6125 / NCTC 8237 / S 107 / Type A</strain>
    </source>
</reference>
<dbReference type="EC" id="3.1.-.-" evidence="1"/>
<dbReference type="EMBL" id="CP000246">
    <property type="protein sequence ID" value="ABG83862.1"/>
    <property type="molecule type" value="Genomic_DNA"/>
</dbReference>
<dbReference type="RefSeq" id="WP_003459753.1">
    <property type="nucleotide sequence ID" value="NC_008261.1"/>
</dbReference>
<dbReference type="STRING" id="195103.CPF_1926"/>
<dbReference type="PaxDb" id="195103-CPF_1926"/>
<dbReference type="GeneID" id="93001790"/>
<dbReference type="KEGG" id="cpf:CPF_1926"/>
<dbReference type="eggNOG" id="COG1418">
    <property type="taxonomic scope" value="Bacteria"/>
</dbReference>
<dbReference type="HOGENOM" id="CLU_028328_1_0_9"/>
<dbReference type="Proteomes" id="UP000001823">
    <property type="component" value="Chromosome"/>
</dbReference>
<dbReference type="GO" id="GO:0005886">
    <property type="term" value="C:plasma membrane"/>
    <property type="evidence" value="ECO:0007669"/>
    <property type="project" value="UniProtKB-SubCell"/>
</dbReference>
<dbReference type="GO" id="GO:0003723">
    <property type="term" value="F:RNA binding"/>
    <property type="evidence" value="ECO:0007669"/>
    <property type="project" value="UniProtKB-UniRule"/>
</dbReference>
<dbReference type="GO" id="GO:0004521">
    <property type="term" value="F:RNA endonuclease activity"/>
    <property type="evidence" value="ECO:0007669"/>
    <property type="project" value="UniProtKB-UniRule"/>
</dbReference>
<dbReference type="GO" id="GO:0006402">
    <property type="term" value="P:mRNA catabolic process"/>
    <property type="evidence" value="ECO:0007669"/>
    <property type="project" value="UniProtKB-UniRule"/>
</dbReference>
<dbReference type="CDD" id="cd00077">
    <property type="entry name" value="HDc"/>
    <property type="match status" value="1"/>
</dbReference>
<dbReference type="CDD" id="cd22431">
    <property type="entry name" value="KH-I_RNaseY"/>
    <property type="match status" value="1"/>
</dbReference>
<dbReference type="FunFam" id="1.10.3210.10:FF:000003">
    <property type="entry name" value="Ribonuclease Y"/>
    <property type="match status" value="1"/>
</dbReference>
<dbReference type="FunFam" id="3.30.1370.10:FF:000006">
    <property type="entry name" value="Ribonuclease Y"/>
    <property type="match status" value="1"/>
</dbReference>
<dbReference type="Gene3D" id="1.10.3210.10">
    <property type="entry name" value="Hypothetical protein af1432"/>
    <property type="match status" value="1"/>
</dbReference>
<dbReference type="Gene3D" id="3.30.1370.10">
    <property type="entry name" value="K Homology domain, type 1"/>
    <property type="match status" value="1"/>
</dbReference>
<dbReference type="HAMAP" id="MF_00335">
    <property type="entry name" value="RNase_Y"/>
    <property type="match status" value="1"/>
</dbReference>
<dbReference type="InterPro" id="IPR003607">
    <property type="entry name" value="HD/PDEase_dom"/>
</dbReference>
<dbReference type="InterPro" id="IPR006674">
    <property type="entry name" value="HD_domain"/>
</dbReference>
<dbReference type="InterPro" id="IPR006675">
    <property type="entry name" value="HDIG_dom"/>
</dbReference>
<dbReference type="InterPro" id="IPR004087">
    <property type="entry name" value="KH_dom"/>
</dbReference>
<dbReference type="InterPro" id="IPR004088">
    <property type="entry name" value="KH_dom_type_1"/>
</dbReference>
<dbReference type="InterPro" id="IPR036612">
    <property type="entry name" value="KH_dom_type_1_sf"/>
</dbReference>
<dbReference type="InterPro" id="IPR017705">
    <property type="entry name" value="Ribonuclease_Y"/>
</dbReference>
<dbReference type="InterPro" id="IPR022711">
    <property type="entry name" value="RNase_Y_N"/>
</dbReference>
<dbReference type="NCBIfam" id="TIGR00277">
    <property type="entry name" value="HDIG"/>
    <property type="match status" value="1"/>
</dbReference>
<dbReference type="NCBIfam" id="TIGR03319">
    <property type="entry name" value="RNase_Y"/>
    <property type="match status" value="1"/>
</dbReference>
<dbReference type="PANTHER" id="PTHR12826">
    <property type="entry name" value="RIBONUCLEASE Y"/>
    <property type="match status" value="1"/>
</dbReference>
<dbReference type="PANTHER" id="PTHR12826:SF15">
    <property type="entry name" value="RIBONUCLEASE Y"/>
    <property type="match status" value="1"/>
</dbReference>
<dbReference type="Pfam" id="PF01966">
    <property type="entry name" value="HD"/>
    <property type="match status" value="1"/>
</dbReference>
<dbReference type="Pfam" id="PF00013">
    <property type="entry name" value="KH_1"/>
    <property type="match status" value="1"/>
</dbReference>
<dbReference type="Pfam" id="PF12072">
    <property type="entry name" value="RNase_Y_N"/>
    <property type="match status" value="1"/>
</dbReference>
<dbReference type="SMART" id="SM00471">
    <property type="entry name" value="HDc"/>
    <property type="match status" value="1"/>
</dbReference>
<dbReference type="SMART" id="SM00322">
    <property type="entry name" value="KH"/>
    <property type="match status" value="1"/>
</dbReference>
<dbReference type="SUPFAM" id="SSF54791">
    <property type="entry name" value="Eukaryotic type KH-domain (KH-domain type I)"/>
    <property type="match status" value="1"/>
</dbReference>
<dbReference type="SUPFAM" id="SSF109604">
    <property type="entry name" value="HD-domain/PDEase-like"/>
    <property type="match status" value="1"/>
</dbReference>
<dbReference type="PROSITE" id="PS51831">
    <property type="entry name" value="HD"/>
    <property type="match status" value="1"/>
</dbReference>
<dbReference type="PROSITE" id="PS50084">
    <property type="entry name" value="KH_TYPE_1"/>
    <property type="match status" value="1"/>
</dbReference>